<organism>
    <name type="scientific">Helicobacter pylori (strain P12)</name>
    <dbReference type="NCBI Taxonomy" id="570508"/>
    <lineage>
        <taxon>Bacteria</taxon>
        <taxon>Pseudomonadati</taxon>
        <taxon>Campylobacterota</taxon>
        <taxon>Epsilonproteobacteria</taxon>
        <taxon>Campylobacterales</taxon>
        <taxon>Helicobacteraceae</taxon>
        <taxon>Helicobacter</taxon>
    </lineage>
</organism>
<feature type="chain" id="PRO_1000128757" description="Large ribosomal subunit protein bL27">
    <location>
        <begin position="1"/>
        <end position="88"/>
    </location>
</feature>
<feature type="region of interest" description="Disordered" evidence="2">
    <location>
        <begin position="1"/>
        <end position="21"/>
    </location>
</feature>
<accession>B6JKM6</accession>
<sequence>MAHKKGQGSTQNNRDSAGRRLGVKKFGSEFVRAGNIIVRQRGTKMHPGNNVGMGKDHTLYALIDGVVKFEHKDRNRKKVSVVSQNFGE</sequence>
<reference key="1">
    <citation type="submission" date="2008-10" db="EMBL/GenBank/DDBJ databases">
        <title>The complete genome sequence of Helicobacter pylori strain P12.</title>
        <authorList>
            <person name="Fischer W."/>
            <person name="Windhager L."/>
            <person name="Karnholz A."/>
            <person name="Zeiller M."/>
            <person name="Zimmer R."/>
            <person name="Haas R."/>
        </authorList>
    </citation>
    <scope>NUCLEOTIDE SEQUENCE [LARGE SCALE GENOMIC DNA]</scope>
    <source>
        <strain>P12</strain>
    </source>
</reference>
<dbReference type="EMBL" id="CP001217">
    <property type="protein sequence ID" value="ACJ07454.1"/>
    <property type="molecule type" value="Genomic_DNA"/>
</dbReference>
<dbReference type="SMR" id="B6JKM6"/>
<dbReference type="KEGG" id="hpp:HPP12_0296"/>
<dbReference type="HOGENOM" id="CLU_095424_4_0_7"/>
<dbReference type="Proteomes" id="UP000008198">
    <property type="component" value="Chromosome"/>
</dbReference>
<dbReference type="GO" id="GO:0022625">
    <property type="term" value="C:cytosolic large ribosomal subunit"/>
    <property type="evidence" value="ECO:0007669"/>
    <property type="project" value="TreeGrafter"/>
</dbReference>
<dbReference type="GO" id="GO:0003735">
    <property type="term" value="F:structural constituent of ribosome"/>
    <property type="evidence" value="ECO:0007669"/>
    <property type="project" value="InterPro"/>
</dbReference>
<dbReference type="GO" id="GO:0006412">
    <property type="term" value="P:translation"/>
    <property type="evidence" value="ECO:0007669"/>
    <property type="project" value="UniProtKB-UniRule"/>
</dbReference>
<dbReference type="FunFam" id="2.40.50.100:FF:000026">
    <property type="entry name" value="50S ribosomal protein L27"/>
    <property type="match status" value="1"/>
</dbReference>
<dbReference type="Gene3D" id="2.40.50.100">
    <property type="match status" value="1"/>
</dbReference>
<dbReference type="HAMAP" id="MF_00539">
    <property type="entry name" value="Ribosomal_bL27"/>
    <property type="match status" value="1"/>
</dbReference>
<dbReference type="InterPro" id="IPR001684">
    <property type="entry name" value="Ribosomal_bL27"/>
</dbReference>
<dbReference type="InterPro" id="IPR018261">
    <property type="entry name" value="Ribosomal_bL27_CS"/>
</dbReference>
<dbReference type="NCBIfam" id="TIGR00062">
    <property type="entry name" value="L27"/>
    <property type="match status" value="1"/>
</dbReference>
<dbReference type="PANTHER" id="PTHR15893:SF0">
    <property type="entry name" value="LARGE RIBOSOMAL SUBUNIT PROTEIN BL27M"/>
    <property type="match status" value="1"/>
</dbReference>
<dbReference type="PANTHER" id="PTHR15893">
    <property type="entry name" value="RIBOSOMAL PROTEIN L27"/>
    <property type="match status" value="1"/>
</dbReference>
<dbReference type="Pfam" id="PF01016">
    <property type="entry name" value="Ribosomal_L27"/>
    <property type="match status" value="1"/>
</dbReference>
<dbReference type="PRINTS" id="PR00063">
    <property type="entry name" value="RIBOSOMALL27"/>
</dbReference>
<dbReference type="SUPFAM" id="SSF110324">
    <property type="entry name" value="Ribosomal L27 protein-like"/>
    <property type="match status" value="1"/>
</dbReference>
<dbReference type="PROSITE" id="PS00831">
    <property type="entry name" value="RIBOSOMAL_L27"/>
    <property type="match status" value="1"/>
</dbReference>
<gene>
    <name evidence="1" type="primary">rpmA</name>
    <name type="ordered locus">HPP12_0296</name>
</gene>
<evidence type="ECO:0000255" key="1">
    <source>
        <dbReference type="HAMAP-Rule" id="MF_00539"/>
    </source>
</evidence>
<evidence type="ECO:0000256" key="2">
    <source>
        <dbReference type="SAM" id="MobiDB-lite"/>
    </source>
</evidence>
<evidence type="ECO:0000305" key="3"/>
<name>RL27_HELP2</name>
<protein>
    <recommendedName>
        <fullName evidence="1">Large ribosomal subunit protein bL27</fullName>
    </recommendedName>
    <alternativeName>
        <fullName evidence="3">50S ribosomal protein L27</fullName>
    </alternativeName>
</protein>
<comment type="similarity">
    <text evidence="1">Belongs to the bacterial ribosomal protein bL27 family.</text>
</comment>
<proteinExistence type="inferred from homology"/>
<keyword id="KW-0687">Ribonucleoprotein</keyword>
<keyword id="KW-0689">Ribosomal protein</keyword>